<dbReference type="EMBL" id="AC010980">
    <property type="status" value="NOT_ANNOTATED_CDS"/>
    <property type="molecule type" value="Genomic_DNA"/>
</dbReference>
<dbReference type="CCDS" id="CCDS92948.1"/>
<dbReference type="RefSeq" id="NP_001382800.1">
    <property type="nucleotide sequence ID" value="NM_001395871.1"/>
</dbReference>
<dbReference type="GlyGen" id="A0A7I2V3R4">
    <property type="glycosylation" value="2 sites"/>
</dbReference>
<dbReference type="PeptideAtlas" id="A0A7I2V3R4"/>
<dbReference type="Ensembl" id="ENST00000678139.2">
    <property type="protein sequence ID" value="ENSP00000503543.1"/>
    <property type="gene ID" value="ENSG00000288658.2"/>
</dbReference>
<dbReference type="GeneID" id="122319436"/>
<dbReference type="MANE-Select" id="ENST00000678139.2">
    <property type="protein sequence ID" value="ENSP00000503543.1"/>
    <property type="RefSeq nucleotide sequence ID" value="NM_001395871.1"/>
    <property type="RefSeq protein sequence ID" value="NP_001382800.1"/>
</dbReference>
<dbReference type="AGR" id="HGNC:55809"/>
<dbReference type="GeneCards" id="RNF228"/>
<dbReference type="HGNC" id="HGNC:55809">
    <property type="gene designation" value="RNF228"/>
</dbReference>
<dbReference type="GeneTree" id="ENSGT00940000166595"/>
<dbReference type="InParanoid" id="A0A7I2V3R4"/>
<dbReference type="OMA" id="WRIACPI"/>
<dbReference type="OrthoDB" id="252722at2759"/>
<dbReference type="Proteomes" id="UP000005640">
    <property type="component" value="Chromosome 2"/>
</dbReference>
<dbReference type="Bgee" id="ENSG00000288658">
    <property type="expression patterns" value="Expressed in male germ line stem cell (sensu Vertebrata) in testis and 112 other cell types or tissues"/>
</dbReference>
<dbReference type="GO" id="GO:0016020">
    <property type="term" value="C:membrane"/>
    <property type="evidence" value="ECO:0007669"/>
    <property type="project" value="UniProtKB-SubCell"/>
</dbReference>
<dbReference type="GO" id="GO:0061630">
    <property type="term" value="F:ubiquitin protein ligase activity"/>
    <property type="evidence" value="ECO:0000318"/>
    <property type="project" value="GO_Central"/>
</dbReference>
<dbReference type="GO" id="GO:0008270">
    <property type="term" value="F:zinc ion binding"/>
    <property type="evidence" value="ECO:0007669"/>
    <property type="project" value="UniProtKB-KW"/>
</dbReference>
<dbReference type="GO" id="GO:0016567">
    <property type="term" value="P:protein ubiquitination"/>
    <property type="evidence" value="ECO:0000318"/>
    <property type="project" value="GO_Central"/>
</dbReference>
<dbReference type="Gene3D" id="3.30.40.10">
    <property type="entry name" value="Zinc/RING finger domain, C3HC4 (zinc finger)"/>
    <property type="match status" value="1"/>
</dbReference>
<dbReference type="InterPro" id="IPR051435">
    <property type="entry name" value="RING_finger_E3_ubiq-ligases"/>
</dbReference>
<dbReference type="InterPro" id="IPR027370">
    <property type="entry name" value="Znf-RING_euk"/>
</dbReference>
<dbReference type="InterPro" id="IPR001841">
    <property type="entry name" value="Znf_RING"/>
</dbReference>
<dbReference type="InterPro" id="IPR013083">
    <property type="entry name" value="Znf_RING/FYVE/PHD"/>
</dbReference>
<dbReference type="InterPro" id="IPR017907">
    <property type="entry name" value="Znf_RING_CS"/>
</dbReference>
<dbReference type="PANTHER" id="PTHR22791">
    <property type="entry name" value="RING-TYPE DOMAIN-CONTAINING PROTEIN"/>
    <property type="match status" value="1"/>
</dbReference>
<dbReference type="PANTHER" id="PTHR22791:SF17">
    <property type="entry name" value="RING-TYPE DOMAIN-CONTAINING PROTEIN"/>
    <property type="match status" value="1"/>
</dbReference>
<dbReference type="Pfam" id="PF13445">
    <property type="entry name" value="zf-RING_UBOX"/>
    <property type="match status" value="1"/>
</dbReference>
<dbReference type="SMART" id="SM00184">
    <property type="entry name" value="RING"/>
    <property type="match status" value="1"/>
</dbReference>
<dbReference type="SUPFAM" id="SSF57850">
    <property type="entry name" value="RING/U-box"/>
    <property type="match status" value="1"/>
</dbReference>
<dbReference type="PROSITE" id="PS00518">
    <property type="entry name" value="ZF_RING_1"/>
    <property type="match status" value="1"/>
</dbReference>
<dbReference type="PROSITE" id="PS50089">
    <property type="entry name" value="ZF_RING_2"/>
    <property type="match status" value="1"/>
</dbReference>
<comment type="subcellular location">
    <subcellularLocation>
        <location evidence="4">Membrane</location>
        <topology evidence="1">Multi-pass membrane protein</topology>
    </subcellularLocation>
</comment>
<organism>
    <name type="scientific">Homo sapiens</name>
    <name type="common">Human</name>
    <dbReference type="NCBI Taxonomy" id="9606"/>
    <lineage>
        <taxon>Eukaryota</taxon>
        <taxon>Metazoa</taxon>
        <taxon>Chordata</taxon>
        <taxon>Craniata</taxon>
        <taxon>Vertebrata</taxon>
        <taxon>Euteleostomi</taxon>
        <taxon>Mammalia</taxon>
        <taxon>Eutheria</taxon>
        <taxon>Euarchontoglires</taxon>
        <taxon>Primates</taxon>
        <taxon>Haplorrhini</taxon>
        <taxon>Catarrhini</taxon>
        <taxon>Hominidae</taxon>
        <taxon>Homo</taxon>
    </lineage>
</organism>
<keyword id="KW-0472">Membrane</keyword>
<keyword id="KW-0479">Metal-binding</keyword>
<keyword id="KW-1267">Proteomics identification</keyword>
<keyword id="KW-1185">Reference proteome</keyword>
<keyword id="KW-0812">Transmembrane</keyword>
<keyword id="KW-1133">Transmembrane helix</keyword>
<keyword id="KW-0862">Zinc</keyword>
<keyword id="KW-0863">Zinc-finger</keyword>
<name>RN228_HUMAN</name>
<evidence type="ECO:0000255" key="1"/>
<evidence type="ECO:0000255" key="2">
    <source>
        <dbReference type="PROSITE-ProRule" id="PRU00175"/>
    </source>
</evidence>
<evidence type="ECO:0000256" key="3">
    <source>
        <dbReference type="SAM" id="MobiDB-lite"/>
    </source>
</evidence>
<evidence type="ECO:0000305" key="4"/>
<evidence type="ECO:0000312" key="5">
    <source>
        <dbReference type="HGNC" id="HGNC:55809"/>
    </source>
</evidence>
<sequence length="345" mass="34659">MAAPASDSGGSQQSPSSSPGSREGAGVAAKGAPDCGDAGARDAAETVSGLPPLEDYECKICYNYFDADRRAPKLLACLHTFCQECLSQLQLRAAAAAAAAAAPERPPRPPPWLCPPGAIACPVCRHRTPLPDSRVHGLPNNTKLAEAFPLALRAAHDPLPQDRLPPLPARLPAPAAAPPPTPAPPPPPSPAPPQPPPPPPAEDAAPGPRARPGLRAPGAYDSCQNCKRAALTAGCVCVVFSFLSMVVLLFTGLIFVNHYGGGGTPGGGAPPGEAPATGSPSPSPVGPICLSVASILALFSVVVTWVICWLKYRPEGAAAGSTGGSGGGGGPRARAAAGGARRSDT</sequence>
<accession>A0A7I2V3R4</accession>
<proteinExistence type="evidence at protein level"/>
<reference key="1">
    <citation type="journal article" date="2005" name="Nature">
        <title>Generation and annotation of the DNA sequences of human chromosomes 2 and 4.</title>
        <authorList>
            <person name="Hillier L.W."/>
            <person name="Graves T.A."/>
            <person name="Fulton R.S."/>
            <person name="Fulton L.A."/>
            <person name="Pepin K.H."/>
            <person name="Minx P."/>
            <person name="Wagner-McPherson C."/>
            <person name="Layman D."/>
            <person name="Wylie K."/>
            <person name="Sekhon M."/>
            <person name="Becker M.C."/>
            <person name="Fewell G.A."/>
            <person name="Delehaunty K.D."/>
            <person name="Miner T.L."/>
            <person name="Nash W.E."/>
            <person name="Kremitzki C."/>
            <person name="Oddy L."/>
            <person name="Du H."/>
            <person name="Sun H."/>
            <person name="Bradshaw-Cordum H."/>
            <person name="Ali J."/>
            <person name="Carter J."/>
            <person name="Cordes M."/>
            <person name="Harris A."/>
            <person name="Isak A."/>
            <person name="van Brunt A."/>
            <person name="Nguyen C."/>
            <person name="Du F."/>
            <person name="Courtney L."/>
            <person name="Kalicki J."/>
            <person name="Ozersky P."/>
            <person name="Abbott S."/>
            <person name="Armstrong J."/>
            <person name="Belter E.A."/>
            <person name="Caruso L."/>
            <person name="Cedroni M."/>
            <person name="Cotton M."/>
            <person name="Davidson T."/>
            <person name="Desai A."/>
            <person name="Elliott G."/>
            <person name="Erb T."/>
            <person name="Fronick C."/>
            <person name="Gaige T."/>
            <person name="Haakenson W."/>
            <person name="Haglund K."/>
            <person name="Holmes A."/>
            <person name="Harkins R."/>
            <person name="Kim K."/>
            <person name="Kruchowski S.S."/>
            <person name="Strong C.M."/>
            <person name="Grewal N."/>
            <person name="Goyea E."/>
            <person name="Hou S."/>
            <person name="Levy A."/>
            <person name="Martinka S."/>
            <person name="Mead K."/>
            <person name="McLellan M.D."/>
            <person name="Meyer R."/>
            <person name="Randall-Maher J."/>
            <person name="Tomlinson C."/>
            <person name="Dauphin-Kohlberg S."/>
            <person name="Kozlowicz-Reilly A."/>
            <person name="Shah N."/>
            <person name="Swearengen-Shahid S."/>
            <person name="Snider J."/>
            <person name="Strong J.T."/>
            <person name="Thompson J."/>
            <person name="Yoakum M."/>
            <person name="Leonard S."/>
            <person name="Pearman C."/>
            <person name="Trani L."/>
            <person name="Radionenko M."/>
            <person name="Waligorski J.E."/>
            <person name="Wang C."/>
            <person name="Rock S.M."/>
            <person name="Tin-Wollam A.-M."/>
            <person name="Maupin R."/>
            <person name="Latreille P."/>
            <person name="Wendl M.C."/>
            <person name="Yang S.-P."/>
            <person name="Pohl C."/>
            <person name="Wallis J.W."/>
            <person name="Spieth J."/>
            <person name="Bieri T.A."/>
            <person name="Berkowicz N."/>
            <person name="Nelson J.O."/>
            <person name="Osborne J."/>
            <person name="Ding L."/>
            <person name="Meyer R."/>
            <person name="Sabo A."/>
            <person name="Shotland Y."/>
            <person name="Sinha P."/>
            <person name="Wohldmann P.E."/>
            <person name="Cook L.L."/>
            <person name="Hickenbotham M.T."/>
            <person name="Eldred J."/>
            <person name="Williams D."/>
            <person name="Jones T.A."/>
            <person name="She X."/>
            <person name="Ciccarelli F.D."/>
            <person name="Izaurralde E."/>
            <person name="Taylor J."/>
            <person name="Schmutz J."/>
            <person name="Myers R.M."/>
            <person name="Cox D.R."/>
            <person name="Huang X."/>
            <person name="McPherson J.D."/>
            <person name="Mardis E.R."/>
            <person name="Clifton S.W."/>
            <person name="Warren W.C."/>
            <person name="Chinwalla A.T."/>
            <person name="Eddy S.R."/>
            <person name="Marra M.A."/>
            <person name="Ovcharenko I."/>
            <person name="Furey T.S."/>
            <person name="Miller W."/>
            <person name="Eichler E.E."/>
            <person name="Bork P."/>
            <person name="Suyama M."/>
            <person name="Torrents D."/>
            <person name="Waterston R.H."/>
            <person name="Wilson R.K."/>
        </authorList>
    </citation>
    <scope>NUCLEOTIDE SEQUENCE [LARGE SCALE GENOMIC DNA]</scope>
</reference>
<gene>
    <name evidence="5" type="primary">RNF228</name>
</gene>
<protein>
    <recommendedName>
        <fullName>RING finger protein 228</fullName>
    </recommendedName>
</protein>
<feature type="chain" id="PRO_0000460451" description="RING finger protein 228">
    <location>
        <begin position="1"/>
        <end position="345"/>
    </location>
</feature>
<feature type="transmembrane region" description="Helical" evidence="1">
    <location>
        <begin position="236"/>
        <end position="256"/>
    </location>
</feature>
<feature type="transmembrane region" description="Helical" evidence="1">
    <location>
        <begin position="290"/>
        <end position="310"/>
    </location>
</feature>
<feature type="zinc finger region" description="RING-type" evidence="2">
    <location>
        <begin position="58"/>
        <end position="125"/>
    </location>
</feature>
<feature type="region of interest" description="Disordered" evidence="3">
    <location>
        <begin position="1"/>
        <end position="43"/>
    </location>
</feature>
<feature type="region of interest" description="Disordered" evidence="3">
    <location>
        <begin position="159"/>
        <end position="213"/>
    </location>
</feature>
<feature type="region of interest" description="Disordered" evidence="3">
    <location>
        <begin position="319"/>
        <end position="345"/>
    </location>
</feature>
<feature type="compositionally biased region" description="Low complexity" evidence="3">
    <location>
        <begin position="1"/>
        <end position="21"/>
    </location>
</feature>
<feature type="compositionally biased region" description="Pro residues" evidence="3">
    <location>
        <begin position="163"/>
        <end position="201"/>
    </location>
</feature>
<feature type="compositionally biased region" description="Low complexity" evidence="3">
    <location>
        <begin position="202"/>
        <end position="213"/>
    </location>
</feature>
<feature type="compositionally biased region" description="Gly residues" evidence="3">
    <location>
        <begin position="321"/>
        <end position="331"/>
    </location>
</feature>
<feature type="compositionally biased region" description="Low complexity" evidence="3">
    <location>
        <begin position="332"/>
        <end position="345"/>
    </location>
</feature>